<sequence length="759" mass="83431">MAEGEDMQTFTSIMDALVRISTSMKNMEKELLCPVCQEMYKQPLVLPCTHNVCQACAREVLGQQGYIGHGGDPSSEPTSPASTPSTRSPRLSRRTLPKPDRLDRLLKSGFGTYPGRKRGALHPQTILFPCPACQGDVELGERGLSGLFRNLTLERVVERYRQSVSVGGAILCQLCKPPPLEATKGCSECRATFCNECFKLFHPWGTQKAQHEPTLPTLSFRPKGLMCPDHKEEVTHYCKTCQRLVCQLCRVRRTHSGHKITPVLSAYQALKDKLTKSLAYILGNQDTVQTQICELEETIRHTEVSGQQAKEEVSQLVRGLGAVLEEKRSSLLQAIEECQQERLSRLSAQIHEHQSLLDGSGLVGYAQEVLKETDQPCFVQAAKQLHNRIARATEALQTFRPAASSSFRHCQLDVGREMKLLTELNFLRVPEAPVIDTQRTFAYDQIFLCWRLPPHSPPAWHYTVEFRRTDVPAQPGPTRWQRREEVRGTSALLENPDTGSVYVLRVRGCNKAGYGEYSEDVHLHTPPAPVLHFFLDGRWGASRERLAISKDQRAVRSIPGLPLLLAAERLLTGCHLSVDVVLGDVAVTQGRSYWACAVDPASYLVKVGVGLESKLQESFQGAPDVISPRYDPDSGHDSGAEDAAVEALPPFAFLTIGMGKILLGSGASSNAGLTGRDGPAASCTVPLPPRLGICLDYERGRVSFLDAVSFRGLLECPLDCSGPVCPAFCFIGGGAVQLQEPVGTKPERKVTIGGFAKLD</sequence>
<comment type="function">
    <text evidence="9">Microtubule-associated protein that is involved in the formation of parallel microtubule bundles linked by cross-bridges in the proximal axon. Required for the uniform orientation and maintenance of the parallel microtubule fascicles, which are important for efficient cargo delivery and trafficking in axons. Thereby also required for proper axon specification, the establishment of neuronal polarity and proper neuronal migration.</text>
</comment>
<comment type="subunit">
    <text evidence="9">Interacts with TUBB3 and TUBA4A.</text>
</comment>
<comment type="subcellular location">
    <subcellularLocation>
        <location evidence="9">Cell projection</location>
        <location evidence="9">Axon</location>
    </subcellularLocation>
    <subcellularLocation>
        <location evidence="9">Cytoplasm</location>
        <location evidence="9">Cytoskeleton</location>
    </subcellularLocation>
    <text evidence="9">Microtubule-associated. Localizes to the proximal part of the axon.</text>
</comment>
<comment type="tissue specificity">
    <text evidence="9">Expressed in primary hippocampal and cortical neurons.</text>
</comment>
<comment type="similarity">
    <text evidence="10">Belongs to the TRIM/RBCC family.</text>
</comment>
<comment type="sequence caution" evidence="10">
    <conflict type="erroneous gene model prediction">
        <sequence resource="EMBL-CDS" id="EDM00656"/>
    </conflict>
</comment>
<name>TRI46_RAT</name>
<feature type="chain" id="PRO_0000441888" description="Tripartite motif-containing protein 46">
    <location>
        <begin position="1"/>
        <end position="759"/>
    </location>
</feature>
<feature type="domain" description="COS" evidence="7">
    <location>
        <begin position="370"/>
        <end position="427"/>
    </location>
</feature>
<feature type="domain" description="Fibronectin type-III" evidence="5">
    <location>
        <begin position="429"/>
        <end position="528"/>
    </location>
</feature>
<feature type="domain" description="B30.2/SPRY" evidence="6">
    <location>
        <begin position="513"/>
        <end position="747"/>
    </location>
</feature>
<feature type="zinc finger region" description="RING-type 1; degenerate" evidence="4">
    <location>
        <begin position="33"/>
        <end position="59"/>
    </location>
</feature>
<feature type="zinc finger region" description="RING-type 2; degenerate" evidence="4">
    <location>
        <begin position="172"/>
        <end position="231"/>
    </location>
</feature>
<feature type="zinc finger region" description="B box-type" evidence="3">
    <location>
        <begin position="222"/>
        <end position="263"/>
    </location>
</feature>
<feature type="region of interest" description="Required for proximal axon localization, axon formation and migration" evidence="1">
    <location>
        <begin position="1"/>
        <end position="166"/>
    </location>
</feature>
<feature type="region of interest" description="Disordered" evidence="8">
    <location>
        <begin position="67"/>
        <end position="98"/>
    </location>
</feature>
<feature type="region of interest" description="Required for microtubule association, proximal axon localization and axon formation" evidence="1">
    <location>
        <begin position="411"/>
        <end position="429"/>
    </location>
</feature>
<feature type="coiled-coil region" evidence="2">
    <location>
        <begin position="294"/>
        <end position="400"/>
    </location>
</feature>
<feature type="compositionally biased region" description="Low complexity" evidence="8">
    <location>
        <begin position="73"/>
        <end position="89"/>
    </location>
</feature>
<feature type="binding site" evidence="3">
    <location>
        <position position="227"/>
    </location>
    <ligand>
        <name>Zn(2+)</name>
        <dbReference type="ChEBI" id="CHEBI:29105"/>
    </ligand>
</feature>
<feature type="binding site" evidence="3">
    <location>
        <position position="230"/>
    </location>
    <ligand>
        <name>Zn(2+)</name>
        <dbReference type="ChEBI" id="CHEBI:29105"/>
    </ligand>
</feature>
<feature type="binding site" evidence="3">
    <location>
        <position position="249"/>
    </location>
    <ligand>
        <name>Zn(2+)</name>
        <dbReference type="ChEBI" id="CHEBI:29105"/>
    </ligand>
</feature>
<feature type="binding site" evidence="3">
    <location>
        <position position="255"/>
    </location>
    <ligand>
        <name>Zn(2+)</name>
        <dbReference type="ChEBI" id="CHEBI:29105"/>
    </ligand>
</feature>
<feature type="modified residue" description="Phosphoserine" evidence="1">
    <location>
        <position position="330"/>
    </location>
</feature>
<feature type="modified residue" description="Phosphoserine" evidence="14">
    <location>
        <position position="627"/>
    </location>
</feature>
<proteinExistence type="evidence at protein level"/>
<organism evidence="12">
    <name type="scientific">Rattus norvegicus</name>
    <name type="common">Rat</name>
    <dbReference type="NCBI Taxonomy" id="10116"/>
    <lineage>
        <taxon>Eukaryota</taxon>
        <taxon>Metazoa</taxon>
        <taxon>Chordata</taxon>
        <taxon>Craniata</taxon>
        <taxon>Vertebrata</taxon>
        <taxon>Euteleostomi</taxon>
        <taxon>Mammalia</taxon>
        <taxon>Eutheria</taxon>
        <taxon>Euarchontoglires</taxon>
        <taxon>Glires</taxon>
        <taxon>Rodentia</taxon>
        <taxon>Myomorpha</taxon>
        <taxon>Muroidea</taxon>
        <taxon>Muridae</taxon>
        <taxon>Murinae</taxon>
        <taxon>Rattus</taxon>
    </lineage>
</organism>
<reference evidence="12" key="1">
    <citation type="journal article" date="2004" name="Nature">
        <title>Genome sequence of the Brown Norway rat yields insights into mammalian evolution.</title>
        <authorList>
            <person name="Gibbs R.A."/>
            <person name="Weinstock G.M."/>
            <person name="Metzker M.L."/>
            <person name="Muzny D.M."/>
            <person name="Sodergren E.J."/>
            <person name="Scherer S."/>
            <person name="Scott G."/>
            <person name="Steffen D."/>
            <person name="Worley K.C."/>
            <person name="Burch P.E."/>
            <person name="Okwuonu G."/>
            <person name="Hines S."/>
            <person name="Lewis L."/>
            <person name="Deramo C."/>
            <person name="Delgado O."/>
            <person name="Dugan-Rocha S."/>
            <person name="Miner G."/>
            <person name="Morgan M."/>
            <person name="Hawes A."/>
            <person name="Gill R."/>
            <person name="Holt R.A."/>
            <person name="Adams M.D."/>
            <person name="Amanatides P.G."/>
            <person name="Baden-Tillson H."/>
            <person name="Barnstead M."/>
            <person name="Chin S."/>
            <person name="Evans C.A."/>
            <person name="Ferriera S."/>
            <person name="Fosler C."/>
            <person name="Glodek A."/>
            <person name="Gu Z."/>
            <person name="Jennings D."/>
            <person name="Kraft C.L."/>
            <person name="Nguyen T."/>
            <person name="Pfannkoch C.M."/>
            <person name="Sitter C."/>
            <person name="Sutton G.G."/>
            <person name="Venter J.C."/>
            <person name="Woodage T."/>
            <person name="Smith D."/>
            <person name="Lee H.-M."/>
            <person name="Gustafson E."/>
            <person name="Cahill P."/>
            <person name="Kana A."/>
            <person name="Doucette-Stamm L."/>
            <person name="Weinstock K."/>
            <person name="Fechtel K."/>
            <person name="Weiss R.B."/>
            <person name="Dunn D.M."/>
            <person name="Green E.D."/>
            <person name="Blakesley R.W."/>
            <person name="Bouffard G.G."/>
            <person name="De Jong P.J."/>
            <person name="Osoegawa K."/>
            <person name="Zhu B."/>
            <person name="Marra M."/>
            <person name="Schein J."/>
            <person name="Bosdet I."/>
            <person name="Fjell C."/>
            <person name="Jones S."/>
            <person name="Krzywinski M."/>
            <person name="Mathewson C."/>
            <person name="Siddiqui A."/>
            <person name="Wye N."/>
            <person name="McPherson J."/>
            <person name="Zhao S."/>
            <person name="Fraser C.M."/>
            <person name="Shetty J."/>
            <person name="Shatsman S."/>
            <person name="Geer K."/>
            <person name="Chen Y."/>
            <person name="Abramzon S."/>
            <person name="Nierman W.C."/>
            <person name="Havlak P.H."/>
            <person name="Chen R."/>
            <person name="Durbin K.J."/>
            <person name="Egan A."/>
            <person name="Ren Y."/>
            <person name="Song X.-Z."/>
            <person name="Li B."/>
            <person name="Liu Y."/>
            <person name="Qin X."/>
            <person name="Cawley S."/>
            <person name="Cooney A.J."/>
            <person name="D'Souza L.M."/>
            <person name="Martin K."/>
            <person name="Wu J.Q."/>
            <person name="Gonzalez-Garay M.L."/>
            <person name="Jackson A.R."/>
            <person name="Kalafus K.J."/>
            <person name="McLeod M.P."/>
            <person name="Milosavljevic A."/>
            <person name="Virk D."/>
            <person name="Volkov A."/>
            <person name="Wheeler D.A."/>
            <person name="Zhang Z."/>
            <person name="Bailey J.A."/>
            <person name="Eichler E.E."/>
            <person name="Tuzun E."/>
            <person name="Birney E."/>
            <person name="Mongin E."/>
            <person name="Ureta-Vidal A."/>
            <person name="Woodwark C."/>
            <person name="Zdobnov E."/>
            <person name="Bork P."/>
            <person name="Suyama M."/>
            <person name="Torrents D."/>
            <person name="Alexandersson M."/>
            <person name="Trask B.J."/>
            <person name="Young J.M."/>
            <person name="Huang H."/>
            <person name="Wang H."/>
            <person name="Xing H."/>
            <person name="Daniels S."/>
            <person name="Gietzen D."/>
            <person name="Schmidt J."/>
            <person name="Stevens K."/>
            <person name="Vitt U."/>
            <person name="Wingrove J."/>
            <person name="Camara F."/>
            <person name="Mar Alba M."/>
            <person name="Abril J.F."/>
            <person name="Guigo R."/>
            <person name="Smit A."/>
            <person name="Dubchak I."/>
            <person name="Rubin E.M."/>
            <person name="Couronne O."/>
            <person name="Poliakov A."/>
            <person name="Huebner N."/>
            <person name="Ganten D."/>
            <person name="Goesele C."/>
            <person name="Hummel O."/>
            <person name="Kreitler T."/>
            <person name="Lee Y.-A."/>
            <person name="Monti J."/>
            <person name="Schulz H."/>
            <person name="Zimdahl H."/>
            <person name="Himmelbauer H."/>
            <person name="Lehrach H."/>
            <person name="Jacob H.J."/>
            <person name="Bromberg S."/>
            <person name="Gullings-Handley J."/>
            <person name="Jensen-Seaman M.I."/>
            <person name="Kwitek A.E."/>
            <person name="Lazar J."/>
            <person name="Pasko D."/>
            <person name="Tonellato P.J."/>
            <person name="Twigger S."/>
            <person name="Ponting C.P."/>
            <person name="Duarte J.M."/>
            <person name="Rice S."/>
            <person name="Goodstadt L."/>
            <person name="Beatson S.A."/>
            <person name="Emes R.D."/>
            <person name="Winter E.E."/>
            <person name="Webber C."/>
            <person name="Brandt P."/>
            <person name="Nyakatura G."/>
            <person name="Adetobi M."/>
            <person name="Chiaromonte F."/>
            <person name="Elnitski L."/>
            <person name="Eswara P."/>
            <person name="Hardison R.C."/>
            <person name="Hou M."/>
            <person name="Kolbe D."/>
            <person name="Makova K."/>
            <person name="Miller W."/>
            <person name="Nekrutenko A."/>
            <person name="Riemer C."/>
            <person name="Schwartz S."/>
            <person name="Taylor J."/>
            <person name="Yang S."/>
            <person name="Zhang Y."/>
            <person name="Lindpaintner K."/>
            <person name="Andrews T.D."/>
            <person name="Caccamo M."/>
            <person name="Clamp M."/>
            <person name="Clarke L."/>
            <person name="Curwen V."/>
            <person name="Durbin R.M."/>
            <person name="Eyras E."/>
            <person name="Searle S.M."/>
            <person name="Cooper G.M."/>
            <person name="Batzoglou S."/>
            <person name="Brudno M."/>
            <person name="Sidow A."/>
            <person name="Stone E.A."/>
            <person name="Payseur B.A."/>
            <person name="Bourque G."/>
            <person name="Lopez-Otin C."/>
            <person name="Puente X.S."/>
            <person name="Chakrabarti K."/>
            <person name="Chatterji S."/>
            <person name="Dewey C."/>
            <person name="Pachter L."/>
            <person name="Bray N."/>
            <person name="Yap V.B."/>
            <person name="Caspi A."/>
            <person name="Tesler G."/>
            <person name="Pevzner P.A."/>
            <person name="Haussler D."/>
            <person name="Roskin K.M."/>
            <person name="Baertsch R."/>
            <person name="Clawson H."/>
            <person name="Furey T.S."/>
            <person name="Hinrichs A.S."/>
            <person name="Karolchik D."/>
            <person name="Kent W.J."/>
            <person name="Rosenbloom K.R."/>
            <person name="Trumbower H."/>
            <person name="Weirauch M."/>
            <person name="Cooper D.N."/>
            <person name="Stenson P.D."/>
            <person name="Ma B."/>
            <person name="Brent M."/>
            <person name="Arumugam M."/>
            <person name="Shteynberg D."/>
            <person name="Copley R.R."/>
            <person name="Taylor M.S."/>
            <person name="Riethman H."/>
            <person name="Mudunuri U."/>
            <person name="Peterson J."/>
            <person name="Guyer M."/>
            <person name="Felsenfeld A."/>
            <person name="Old S."/>
            <person name="Mockrin S."/>
            <person name="Collins F.S."/>
        </authorList>
    </citation>
    <scope>NUCLEOTIDE SEQUENCE [LARGE SCALE GENOMIC DNA]</scope>
    <source>
        <strain>Brown Norway</strain>
    </source>
</reference>
<reference evidence="11" key="2">
    <citation type="submission" date="2005-09" db="EMBL/GenBank/DDBJ databases">
        <authorList>
            <person name="Mural R.J."/>
            <person name="Adams M.D."/>
            <person name="Myers E.W."/>
            <person name="Smith H.O."/>
            <person name="Venter J.C."/>
        </authorList>
    </citation>
    <scope>NUCLEOTIDE SEQUENCE [LARGE SCALE GENOMIC DNA]</scope>
</reference>
<reference key="3">
    <citation type="journal article" date="2012" name="Nat. Commun.">
        <title>Quantitative maps of protein phosphorylation sites across 14 different rat organs and tissues.</title>
        <authorList>
            <person name="Lundby A."/>
            <person name="Secher A."/>
            <person name="Lage K."/>
            <person name="Nordsborg N.B."/>
            <person name="Dmytriyev A."/>
            <person name="Lundby C."/>
            <person name="Olsen J.V."/>
        </authorList>
    </citation>
    <scope>PHOSPHORYLATION [LARGE SCALE ANALYSIS] AT SER-627</scope>
    <scope>IDENTIFICATION BY MASS SPECTROMETRY [LARGE SCALE ANALYSIS]</scope>
</reference>
<reference evidence="10" key="4">
    <citation type="journal article" date="2015" name="Neuron">
        <title>TRIM46 controls neuronal polarity and axon specification by driving the formation of parallel microtubule arrays.</title>
        <authorList>
            <person name="van Beuningen S.F."/>
            <person name="Will L."/>
            <person name="Harterink M."/>
            <person name="Chazeau A."/>
            <person name="van Battum E.Y."/>
            <person name="Frias C.P."/>
            <person name="Franker M.A."/>
            <person name="Katrukha E.A."/>
            <person name="Stucchi R."/>
            <person name="Vocking K."/>
            <person name="Antunes A.T."/>
            <person name="Slenders L."/>
            <person name="Doulkeridou S."/>
            <person name="Sillevis Smitt P."/>
            <person name="Altelaar A.F."/>
            <person name="Post J.A."/>
            <person name="Akhmanova A."/>
            <person name="Pasterkamp R.J."/>
            <person name="Kapitein L.C."/>
            <person name="de Graaff E."/>
            <person name="Hoogenraad C.C."/>
        </authorList>
    </citation>
    <scope>FUNCTION</scope>
    <scope>INTERACTION WITH TUBB3 AND TUBA4A</scope>
    <scope>SUBCELLULAR LOCATION</scope>
    <scope>TISSUE SPECIFICITY</scope>
    <scope>IDENTIFICATION BY MASS SPECTROMETRY</scope>
</reference>
<dbReference type="EMBL" id="AC098750">
    <property type="status" value="NOT_ANNOTATED_CDS"/>
    <property type="molecule type" value="Genomic_DNA"/>
</dbReference>
<dbReference type="EMBL" id="CH473976">
    <property type="protein sequence ID" value="EDM00656.1"/>
    <property type="status" value="ALT_SEQ"/>
    <property type="molecule type" value="Genomic_DNA"/>
</dbReference>
<dbReference type="RefSeq" id="NP_001101161.1">
    <property type="nucleotide sequence ID" value="NM_001107691.1"/>
</dbReference>
<dbReference type="RefSeq" id="NP_001382034.1">
    <property type="nucleotide sequence ID" value="NM_001395105.1"/>
</dbReference>
<dbReference type="RefSeq" id="XP_008759392.1">
    <property type="nucleotide sequence ID" value="XM_008761170.2"/>
</dbReference>
<dbReference type="SMR" id="A0A0G2JXN2"/>
<dbReference type="FunCoup" id="A0A0G2JXN2">
    <property type="interactions" value="1195"/>
</dbReference>
<dbReference type="STRING" id="10116.ENSRNOP00000070340"/>
<dbReference type="GlyGen" id="A0A0G2JXN2">
    <property type="glycosylation" value="2 sites"/>
</dbReference>
<dbReference type="iPTMnet" id="A0A0G2JXN2"/>
<dbReference type="PhosphoSitePlus" id="A0A0G2JXN2"/>
<dbReference type="Ensembl" id="ENSRNOT00000077074.2">
    <property type="protein sequence ID" value="ENSRNOP00000075661.2"/>
    <property type="gene ID" value="ENSRNOG00000055433.2"/>
</dbReference>
<dbReference type="GeneID" id="310641"/>
<dbReference type="AGR" id="RGD:1305993"/>
<dbReference type="RGD" id="1305993">
    <property type="gene designation" value="Trim46"/>
</dbReference>
<dbReference type="GeneTree" id="ENSGT00940000158021"/>
<dbReference type="InParanoid" id="A0A0G2JXN2"/>
<dbReference type="OMA" id="XIARATE"/>
<dbReference type="OrthoDB" id="10040278at2759"/>
<dbReference type="PRO" id="PR:A0A0G2JXN2"/>
<dbReference type="Proteomes" id="UP000002494">
    <property type="component" value="Chromosome 2"/>
</dbReference>
<dbReference type="Proteomes" id="UP000234681">
    <property type="component" value="Chromosome 2"/>
</dbReference>
<dbReference type="GO" id="GO:1904115">
    <property type="term" value="C:axon cytoplasm"/>
    <property type="evidence" value="ECO:0007669"/>
    <property type="project" value="GOC"/>
</dbReference>
<dbReference type="GO" id="GO:0043194">
    <property type="term" value="C:axon initial segment"/>
    <property type="evidence" value="ECO:0000266"/>
    <property type="project" value="RGD"/>
</dbReference>
<dbReference type="GO" id="GO:0005856">
    <property type="term" value="C:cytoskeleton"/>
    <property type="evidence" value="ECO:0007669"/>
    <property type="project" value="UniProtKB-SubCell"/>
</dbReference>
<dbReference type="GO" id="GO:0044304">
    <property type="term" value="C:main axon"/>
    <property type="evidence" value="ECO:0000314"/>
    <property type="project" value="ARUK-UCL"/>
</dbReference>
<dbReference type="GO" id="GO:1990769">
    <property type="term" value="C:proximal neuron projection"/>
    <property type="evidence" value="ECO:0000266"/>
    <property type="project" value="RGD"/>
</dbReference>
<dbReference type="GO" id="GO:0008270">
    <property type="term" value="F:zinc ion binding"/>
    <property type="evidence" value="ECO:0007669"/>
    <property type="project" value="UniProtKB-KW"/>
</dbReference>
<dbReference type="GO" id="GO:0048490">
    <property type="term" value="P:anterograde synaptic vesicle transport"/>
    <property type="evidence" value="ECO:0000266"/>
    <property type="project" value="RGD"/>
</dbReference>
<dbReference type="GO" id="GO:0007409">
    <property type="term" value="P:axonogenesis"/>
    <property type="evidence" value="ECO:0000266"/>
    <property type="project" value="RGD"/>
</dbReference>
<dbReference type="GO" id="GO:0001578">
    <property type="term" value="P:microtubule bundle formation"/>
    <property type="evidence" value="ECO:0000266"/>
    <property type="project" value="RGD"/>
</dbReference>
<dbReference type="GO" id="GO:0000226">
    <property type="term" value="P:microtubule cytoskeleton organization"/>
    <property type="evidence" value="ECO:0000266"/>
    <property type="project" value="RGD"/>
</dbReference>
<dbReference type="GO" id="GO:0030517">
    <property type="term" value="P:negative regulation of axon extension"/>
    <property type="evidence" value="ECO:0000315"/>
    <property type="project" value="ARUK-UCL"/>
</dbReference>
<dbReference type="GO" id="GO:0001764">
    <property type="term" value="P:neuron migration"/>
    <property type="evidence" value="ECO:0000266"/>
    <property type="project" value="RGD"/>
</dbReference>
<dbReference type="GO" id="GO:1901953">
    <property type="term" value="P:positive regulation of anterograde dense core granule transport"/>
    <property type="evidence" value="ECO:0000315"/>
    <property type="project" value="ARUK-UCL"/>
</dbReference>
<dbReference type="GO" id="GO:0099612">
    <property type="term" value="P:protein localization to axon"/>
    <property type="evidence" value="ECO:0000266"/>
    <property type="project" value="RGD"/>
</dbReference>
<dbReference type="GO" id="GO:0032880">
    <property type="term" value="P:regulation of protein localization"/>
    <property type="evidence" value="ECO:0000315"/>
    <property type="project" value="ARUK-UCL"/>
</dbReference>
<dbReference type="CDD" id="cd19849">
    <property type="entry name" value="Bbox1_TRIM46_C-I"/>
    <property type="match status" value="1"/>
</dbReference>
<dbReference type="CDD" id="cd19786">
    <property type="entry name" value="Bbox2_TRIM46_C-I"/>
    <property type="match status" value="1"/>
</dbReference>
<dbReference type="CDD" id="cd00063">
    <property type="entry name" value="FN3"/>
    <property type="match status" value="1"/>
</dbReference>
<dbReference type="CDD" id="cd16757">
    <property type="entry name" value="RING-HC_TRIM46_C-I"/>
    <property type="match status" value="1"/>
</dbReference>
<dbReference type="CDD" id="cd12895">
    <property type="entry name" value="SPRY_PRY_TRIM46"/>
    <property type="match status" value="1"/>
</dbReference>
<dbReference type="FunFam" id="4.10.830.40:FF:000001">
    <property type="entry name" value="E3 ubiquitin-protein ligase TRIM9 isoform X1"/>
    <property type="match status" value="1"/>
</dbReference>
<dbReference type="FunFam" id="2.60.40.10:FF:000471">
    <property type="entry name" value="Tripartite motif-containing 46, isoform CRA_c"/>
    <property type="match status" value="1"/>
</dbReference>
<dbReference type="FunFam" id="3.30.160.60:FF:000500">
    <property type="entry name" value="Tripartite motif-containing 46, isoform CRA_c"/>
    <property type="match status" value="1"/>
</dbReference>
<dbReference type="FunFam" id="3.30.40.10:FF:000243">
    <property type="entry name" value="Tripartite motif-containing 46, isoform CRA_c"/>
    <property type="match status" value="1"/>
</dbReference>
<dbReference type="FunFam" id="2.60.120.920:FF:000026">
    <property type="entry name" value="tripartite motif-containing protein 46 isoform X2"/>
    <property type="match status" value="1"/>
</dbReference>
<dbReference type="Gene3D" id="1.20.5.170">
    <property type="match status" value="1"/>
</dbReference>
<dbReference type="Gene3D" id="2.60.120.920">
    <property type="match status" value="1"/>
</dbReference>
<dbReference type="Gene3D" id="4.10.830.40">
    <property type="match status" value="1"/>
</dbReference>
<dbReference type="Gene3D" id="3.30.160.60">
    <property type="entry name" value="Classic Zinc Finger"/>
    <property type="match status" value="1"/>
</dbReference>
<dbReference type="Gene3D" id="2.60.40.10">
    <property type="entry name" value="Immunoglobulins"/>
    <property type="match status" value="1"/>
</dbReference>
<dbReference type="Gene3D" id="3.30.40.10">
    <property type="entry name" value="Zinc/RING finger domain, C3HC4 (zinc finger)"/>
    <property type="match status" value="1"/>
</dbReference>
<dbReference type="InterPro" id="IPR001870">
    <property type="entry name" value="B30.2/SPRY"/>
</dbReference>
<dbReference type="InterPro" id="IPR043136">
    <property type="entry name" value="B30.2/SPRY_sf"/>
</dbReference>
<dbReference type="InterPro" id="IPR013320">
    <property type="entry name" value="ConA-like_dom_sf"/>
</dbReference>
<dbReference type="InterPro" id="IPR017903">
    <property type="entry name" value="COS_domain"/>
</dbReference>
<dbReference type="InterPro" id="IPR050617">
    <property type="entry name" value="E3_ligase_FN3/SPRY"/>
</dbReference>
<dbReference type="InterPro" id="IPR003961">
    <property type="entry name" value="FN3_dom"/>
</dbReference>
<dbReference type="InterPro" id="IPR036116">
    <property type="entry name" value="FN3_sf"/>
</dbReference>
<dbReference type="InterPro" id="IPR013783">
    <property type="entry name" value="Ig-like_fold"/>
</dbReference>
<dbReference type="InterPro" id="IPR040859">
    <property type="entry name" value="Midline-1_COS"/>
</dbReference>
<dbReference type="InterPro" id="IPR035731">
    <property type="entry name" value="SPRY/PRY_TRIM46"/>
</dbReference>
<dbReference type="InterPro" id="IPR027370">
    <property type="entry name" value="Znf-RING_euk"/>
</dbReference>
<dbReference type="InterPro" id="IPR000315">
    <property type="entry name" value="Znf_B-box"/>
</dbReference>
<dbReference type="InterPro" id="IPR001841">
    <property type="entry name" value="Znf_RING"/>
</dbReference>
<dbReference type="InterPro" id="IPR013083">
    <property type="entry name" value="Znf_RING/FYVE/PHD"/>
</dbReference>
<dbReference type="InterPro" id="IPR017907">
    <property type="entry name" value="Znf_RING_CS"/>
</dbReference>
<dbReference type="PANTHER" id="PTHR24099">
    <property type="entry name" value="E3 UBIQUITIN-PROTEIN LIGASE TRIM36-RELATED"/>
    <property type="match status" value="1"/>
</dbReference>
<dbReference type="PANTHER" id="PTHR24099:SF20">
    <property type="entry name" value="TRIPARTITE MOTIF-CONTAINING PROTEIN 46"/>
    <property type="match status" value="1"/>
</dbReference>
<dbReference type="Pfam" id="PF18568">
    <property type="entry name" value="COS"/>
    <property type="match status" value="1"/>
</dbReference>
<dbReference type="Pfam" id="PF00643">
    <property type="entry name" value="zf-B_box"/>
    <property type="match status" value="1"/>
</dbReference>
<dbReference type="Pfam" id="PF13445">
    <property type="entry name" value="zf-RING_UBOX"/>
    <property type="match status" value="1"/>
</dbReference>
<dbReference type="SMART" id="SM00336">
    <property type="entry name" value="BBOX"/>
    <property type="match status" value="1"/>
</dbReference>
<dbReference type="SMART" id="SM00184">
    <property type="entry name" value="RING"/>
    <property type="match status" value="1"/>
</dbReference>
<dbReference type="SUPFAM" id="SSF57845">
    <property type="entry name" value="B-box zinc-binding domain"/>
    <property type="match status" value="1"/>
</dbReference>
<dbReference type="SUPFAM" id="SSF49899">
    <property type="entry name" value="Concanavalin A-like lectins/glucanases"/>
    <property type="match status" value="1"/>
</dbReference>
<dbReference type="SUPFAM" id="SSF49265">
    <property type="entry name" value="Fibronectin type III"/>
    <property type="match status" value="1"/>
</dbReference>
<dbReference type="SUPFAM" id="SSF57850">
    <property type="entry name" value="RING/U-box"/>
    <property type="match status" value="1"/>
</dbReference>
<dbReference type="PROSITE" id="PS50188">
    <property type="entry name" value="B302_SPRY"/>
    <property type="match status" value="1"/>
</dbReference>
<dbReference type="PROSITE" id="PS51262">
    <property type="entry name" value="COS"/>
    <property type="match status" value="1"/>
</dbReference>
<dbReference type="PROSITE" id="PS50853">
    <property type="entry name" value="FN3"/>
    <property type="match status" value="1"/>
</dbReference>
<dbReference type="PROSITE" id="PS50119">
    <property type="entry name" value="ZF_BBOX"/>
    <property type="match status" value="1"/>
</dbReference>
<dbReference type="PROSITE" id="PS00518">
    <property type="entry name" value="ZF_RING_1"/>
    <property type="match status" value="1"/>
</dbReference>
<keyword id="KW-0966">Cell projection</keyword>
<keyword id="KW-0175">Coiled coil</keyword>
<keyword id="KW-0963">Cytoplasm</keyword>
<keyword id="KW-0206">Cytoskeleton</keyword>
<keyword id="KW-0479">Metal-binding</keyword>
<keyword id="KW-0597">Phosphoprotein</keyword>
<keyword id="KW-1185">Reference proteome</keyword>
<keyword id="KW-0677">Repeat</keyword>
<keyword id="KW-0862">Zinc</keyword>
<keyword id="KW-0863">Zinc-finger</keyword>
<accession>A0A0G2JXN2</accession>
<accession>A0A096MKD9</accession>
<gene>
    <name evidence="13" type="primary">Trim46</name>
</gene>
<evidence type="ECO:0000250" key="1">
    <source>
        <dbReference type="UniProtKB" id="Q7TNM2"/>
    </source>
</evidence>
<evidence type="ECO:0000255" key="2"/>
<evidence type="ECO:0000255" key="3">
    <source>
        <dbReference type="PROSITE-ProRule" id="PRU00024"/>
    </source>
</evidence>
<evidence type="ECO:0000255" key="4">
    <source>
        <dbReference type="PROSITE-ProRule" id="PRU00175"/>
    </source>
</evidence>
<evidence type="ECO:0000255" key="5">
    <source>
        <dbReference type="PROSITE-ProRule" id="PRU00316"/>
    </source>
</evidence>
<evidence type="ECO:0000255" key="6">
    <source>
        <dbReference type="PROSITE-ProRule" id="PRU00548"/>
    </source>
</evidence>
<evidence type="ECO:0000255" key="7">
    <source>
        <dbReference type="PROSITE-ProRule" id="PRU00586"/>
    </source>
</evidence>
<evidence type="ECO:0000256" key="8">
    <source>
        <dbReference type="SAM" id="MobiDB-lite"/>
    </source>
</evidence>
<evidence type="ECO:0000269" key="9">
    <source>
    </source>
</evidence>
<evidence type="ECO:0000305" key="10"/>
<evidence type="ECO:0000312" key="11">
    <source>
        <dbReference type="EMBL" id="EDM00656.1"/>
    </source>
</evidence>
<evidence type="ECO:0000312" key="12">
    <source>
        <dbReference type="Proteomes" id="UP000002494"/>
    </source>
</evidence>
<evidence type="ECO:0000312" key="13">
    <source>
        <dbReference type="RGD" id="1305993"/>
    </source>
</evidence>
<evidence type="ECO:0007744" key="14">
    <source>
    </source>
</evidence>
<protein>
    <recommendedName>
        <fullName evidence="10">Tripartite motif-containing protein 46</fullName>
    </recommendedName>
</protein>